<sequence>MNSTIWLALALVLVLEGLGPMLYPKAWKKMISAMTNLPDNILRRFGGGLVVAGVVVYYMLRKTIG</sequence>
<protein>
    <recommendedName>
        <fullName>Uncharacterized protein YjeT</fullName>
    </recommendedName>
</protein>
<reference key="1">
    <citation type="journal article" date="2002" name="Nucleic Acids Res.">
        <title>Genome sequence of Shigella flexneri 2a: insights into pathogenicity through comparison with genomes of Escherichia coli K12 and O157.</title>
        <authorList>
            <person name="Jin Q."/>
            <person name="Yuan Z."/>
            <person name="Xu J."/>
            <person name="Wang Y."/>
            <person name="Shen Y."/>
            <person name="Lu W."/>
            <person name="Wang J."/>
            <person name="Liu H."/>
            <person name="Yang J."/>
            <person name="Yang F."/>
            <person name="Zhang X."/>
            <person name="Zhang J."/>
            <person name="Yang G."/>
            <person name="Wu H."/>
            <person name="Qu D."/>
            <person name="Dong J."/>
            <person name="Sun L."/>
            <person name="Xue Y."/>
            <person name="Zhao A."/>
            <person name="Gao Y."/>
            <person name="Zhu J."/>
            <person name="Kan B."/>
            <person name="Ding K."/>
            <person name="Chen S."/>
            <person name="Cheng H."/>
            <person name="Yao Z."/>
            <person name="He B."/>
            <person name="Chen R."/>
            <person name="Ma D."/>
            <person name="Qiang B."/>
            <person name="Wen Y."/>
            <person name="Hou Y."/>
            <person name="Yu J."/>
        </authorList>
    </citation>
    <scope>NUCLEOTIDE SEQUENCE [LARGE SCALE GENOMIC DNA]</scope>
    <source>
        <strain>301 / Serotype 2a</strain>
    </source>
</reference>
<reference key="2">
    <citation type="journal article" date="2003" name="Infect. Immun.">
        <title>Complete genome sequence and comparative genomics of Shigella flexneri serotype 2a strain 2457T.</title>
        <authorList>
            <person name="Wei J."/>
            <person name="Goldberg M.B."/>
            <person name="Burland V."/>
            <person name="Venkatesan M.M."/>
            <person name="Deng W."/>
            <person name="Fournier G."/>
            <person name="Mayhew G.F."/>
            <person name="Plunkett G. III"/>
            <person name="Rose D.J."/>
            <person name="Darling A."/>
            <person name="Mau B."/>
            <person name="Perna N.T."/>
            <person name="Payne S.M."/>
            <person name="Runyen-Janecky L.J."/>
            <person name="Zhou S."/>
            <person name="Schwartz D.C."/>
            <person name="Blattner F.R."/>
        </authorList>
    </citation>
    <scope>NUCLEOTIDE SEQUENCE [LARGE SCALE GENOMIC DNA]</scope>
    <source>
        <strain>ATCC 700930 / 2457T / Serotype 2a</strain>
    </source>
</reference>
<feature type="chain" id="PRO_0000169745" description="Uncharacterized protein YjeT">
    <location>
        <begin position="1"/>
        <end position="65"/>
    </location>
</feature>
<feature type="transmembrane region" description="Helical" evidence="1">
    <location>
        <begin position="4"/>
        <end position="24"/>
    </location>
</feature>
<feature type="transmembrane region" description="Helical" evidence="1">
    <location>
        <begin position="45"/>
        <end position="65"/>
    </location>
</feature>
<gene>
    <name type="primary">yjeT</name>
    <name type="ordered locus">SF4331</name>
    <name type="ordered locus">S4599</name>
</gene>
<proteinExistence type="predicted"/>
<organism>
    <name type="scientific">Shigella flexneri</name>
    <dbReference type="NCBI Taxonomy" id="623"/>
    <lineage>
        <taxon>Bacteria</taxon>
        <taxon>Pseudomonadati</taxon>
        <taxon>Pseudomonadota</taxon>
        <taxon>Gammaproteobacteria</taxon>
        <taxon>Enterobacterales</taxon>
        <taxon>Enterobacteriaceae</taxon>
        <taxon>Shigella</taxon>
    </lineage>
</organism>
<name>YJET_SHIFL</name>
<dbReference type="EMBL" id="AE005674">
    <property type="protein sequence ID" value="AAN45748.1"/>
    <property type="molecule type" value="Genomic_DNA"/>
</dbReference>
<dbReference type="EMBL" id="AE014073">
    <property type="protein sequence ID" value="AAP19531.1"/>
    <property type="molecule type" value="Genomic_DNA"/>
</dbReference>
<dbReference type="RefSeq" id="NP_710041.1">
    <property type="nucleotide sequence ID" value="NC_004337.2"/>
</dbReference>
<dbReference type="RefSeq" id="WP_001089295.1">
    <property type="nucleotide sequence ID" value="NZ_WPGW01000048.1"/>
</dbReference>
<dbReference type="STRING" id="198214.SF4331"/>
<dbReference type="PaxDb" id="198214-SF4331"/>
<dbReference type="GeneID" id="1027381"/>
<dbReference type="KEGG" id="sfl:SF4331"/>
<dbReference type="KEGG" id="sfx:S4599"/>
<dbReference type="PATRIC" id="fig|198214.7.peg.5105"/>
<dbReference type="HOGENOM" id="CLU_179416_0_0_6"/>
<dbReference type="Proteomes" id="UP000001006">
    <property type="component" value="Chromosome"/>
</dbReference>
<dbReference type="Proteomes" id="UP000002673">
    <property type="component" value="Chromosome"/>
</dbReference>
<dbReference type="GO" id="GO:0005886">
    <property type="term" value="C:plasma membrane"/>
    <property type="evidence" value="ECO:0007669"/>
    <property type="project" value="UniProtKB-SubCell"/>
</dbReference>
<dbReference type="InterPro" id="IPR019201">
    <property type="entry name" value="DUF2065"/>
</dbReference>
<dbReference type="PANTHER" id="PTHR38602:SF1">
    <property type="entry name" value="INNER MEMBRANE PROTEIN"/>
    <property type="match status" value="1"/>
</dbReference>
<dbReference type="PANTHER" id="PTHR38602">
    <property type="entry name" value="INNER MEMBRANE PROTEIN-RELATED"/>
    <property type="match status" value="1"/>
</dbReference>
<dbReference type="Pfam" id="PF09838">
    <property type="entry name" value="DUF2065"/>
    <property type="match status" value="1"/>
</dbReference>
<keyword id="KW-1003">Cell membrane</keyword>
<keyword id="KW-0472">Membrane</keyword>
<keyword id="KW-1185">Reference proteome</keyword>
<keyword id="KW-0812">Transmembrane</keyword>
<keyword id="KW-1133">Transmembrane helix</keyword>
<accession>P0AF75</accession>
<accession>P39289</accession>
<comment type="subcellular location">
    <subcellularLocation>
        <location evidence="2">Cell membrane</location>
        <topology evidence="2">Multi-pass membrane protein</topology>
    </subcellularLocation>
</comment>
<evidence type="ECO:0000255" key="1"/>
<evidence type="ECO:0000305" key="2"/>